<name>Y2060_VIBA3</name>
<feature type="chain" id="PRO_1000164493" description="UPF0434 protein VS_2060">
    <location>
        <begin position="1"/>
        <end position="59"/>
    </location>
</feature>
<sequence>MDHRLLEIVACPVCKGKLTFDKDKQELVCKIDRLAYPIKEGIPVLLEPEARTVSMDEGK</sequence>
<dbReference type="EMBL" id="FM954972">
    <property type="protein sequence ID" value="CAV19236.1"/>
    <property type="molecule type" value="Genomic_DNA"/>
</dbReference>
<dbReference type="SMR" id="B7VH36"/>
<dbReference type="STRING" id="575788.VS_2060"/>
<dbReference type="KEGG" id="vsp:VS_2060"/>
<dbReference type="eggNOG" id="COG2835">
    <property type="taxonomic scope" value="Bacteria"/>
</dbReference>
<dbReference type="HOGENOM" id="CLU_155659_3_1_6"/>
<dbReference type="Proteomes" id="UP000009100">
    <property type="component" value="Chromosome 1"/>
</dbReference>
<dbReference type="GO" id="GO:0005829">
    <property type="term" value="C:cytosol"/>
    <property type="evidence" value="ECO:0007669"/>
    <property type="project" value="TreeGrafter"/>
</dbReference>
<dbReference type="FunFam" id="2.20.25.10:FF:000002">
    <property type="entry name" value="UPF0434 protein YcaR"/>
    <property type="match status" value="1"/>
</dbReference>
<dbReference type="Gene3D" id="2.20.25.10">
    <property type="match status" value="1"/>
</dbReference>
<dbReference type="HAMAP" id="MF_01187">
    <property type="entry name" value="UPF0434"/>
    <property type="match status" value="1"/>
</dbReference>
<dbReference type="InterPro" id="IPR005651">
    <property type="entry name" value="Trm112-like"/>
</dbReference>
<dbReference type="PANTHER" id="PTHR33505:SF4">
    <property type="entry name" value="PROTEIN PREY, MITOCHONDRIAL"/>
    <property type="match status" value="1"/>
</dbReference>
<dbReference type="PANTHER" id="PTHR33505">
    <property type="entry name" value="ZGC:162634"/>
    <property type="match status" value="1"/>
</dbReference>
<dbReference type="Pfam" id="PF03966">
    <property type="entry name" value="Trm112p"/>
    <property type="match status" value="1"/>
</dbReference>
<dbReference type="SUPFAM" id="SSF158997">
    <property type="entry name" value="Trm112p-like"/>
    <property type="match status" value="1"/>
</dbReference>
<organism>
    <name type="scientific">Vibrio atlanticus (strain LGP32)</name>
    <name type="common">Vibrio splendidus (strain Mel32)</name>
    <dbReference type="NCBI Taxonomy" id="575788"/>
    <lineage>
        <taxon>Bacteria</taxon>
        <taxon>Pseudomonadati</taxon>
        <taxon>Pseudomonadota</taxon>
        <taxon>Gammaproteobacteria</taxon>
        <taxon>Vibrionales</taxon>
        <taxon>Vibrionaceae</taxon>
        <taxon>Vibrio</taxon>
    </lineage>
</organism>
<accession>B7VH36</accession>
<evidence type="ECO:0000255" key="1">
    <source>
        <dbReference type="HAMAP-Rule" id="MF_01187"/>
    </source>
</evidence>
<protein>
    <recommendedName>
        <fullName evidence="1">UPF0434 protein VS_2060</fullName>
    </recommendedName>
</protein>
<reference key="1">
    <citation type="submission" date="2009-02" db="EMBL/GenBank/DDBJ databases">
        <title>Vibrio splendidus str. LGP32 complete genome.</title>
        <authorList>
            <person name="Mazel D."/>
            <person name="Le Roux F."/>
        </authorList>
    </citation>
    <scope>NUCLEOTIDE SEQUENCE [LARGE SCALE GENOMIC DNA]</scope>
    <source>
        <strain>LGP32</strain>
    </source>
</reference>
<comment type="similarity">
    <text evidence="1">Belongs to the UPF0434 family.</text>
</comment>
<proteinExistence type="inferred from homology"/>
<gene>
    <name type="ordered locus">VS_2060</name>
</gene>